<sequence length="506" mass="57075">MKFSQWYTLTAPLLISSLYTVNAANDLRGVASDKSDLYKPDAKGNWKCLGSDKLISFNQVNDDYCDCPDGSDEPGTSACHNGKFFCKNTGYISSYIPSNRVDDTVCDCCDGSDESLIKCPNTCAQKAREYLATLEEHNRLVKNGLKIREQWALESAKKTDEVKARYKEISDSLVAVSAEKTQLSEKVEKMKRSTDLGAEAVLPLDFQDLRVALLSLVDERNEMQERLDILTNLLDELTLLYETDKFDETMKEAILSFEDLKEQEIRRKVSSDDVHNYLESCNNHLSMLTGPSEDITFSSLIKDIKKILNSLVWNIKLSLINFGILSPSASSTPLTDSESYRRFEAAQRDLDAAEENEKSLEKEHTKLMHELEYHHGWDLYRAIKGMETKREIGGYTYKVVFYENVFQDSILLGNFASQEGNVLKYENGQSCWNGPHRSAIVTVECGVENEIVSVLEAQKCEYLIKMKSPAACSPDQLKQSLLNTQNSANENAVNGMEDKESSVDEL</sequence>
<feature type="signal peptide" evidence="2">
    <location>
        <begin position="1"/>
        <end position="23"/>
    </location>
</feature>
<feature type="chain" id="PRO_0000014209" description="Glucosidase 2 subunit beta">
    <location>
        <begin position="24"/>
        <end position="506"/>
    </location>
</feature>
<feature type="domain" description="MRH" evidence="3">
    <location>
        <begin position="279"/>
        <end position="474"/>
    </location>
</feature>
<feature type="coiled-coil region" evidence="2">
    <location>
        <begin position="172"/>
        <end position="243"/>
    </location>
</feature>
<feature type="coiled-coil region" evidence="2">
    <location>
        <begin position="338"/>
        <end position="374"/>
    </location>
</feature>
<feature type="short sequence motif" description="ER retrieval sequence">
    <location>
        <begin position="503"/>
        <end position="506"/>
    </location>
</feature>
<feature type="disulfide bond" evidence="1">
    <location>
        <begin position="86"/>
        <end position="108"/>
    </location>
</feature>
<feature type="disulfide bond" evidence="3">
    <location>
        <begin position="431"/>
        <end position="460"/>
    </location>
</feature>
<feature type="disulfide bond" evidence="3">
    <location>
        <begin position="445"/>
        <end position="472"/>
    </location>
</feature>
<feature type="mutagenesis site" description="Impairs interaction with gls2." evidence="7">
    <original>E</original>
    <variation>A</variation>
    <location>
        <position position="73"/>
    </location>
</feature>
<feature type="mutagenesis site" description="Impairs interaction with gls2." evidence="7">
    <original>E</original>
    <variation>A</variation>
    <location>
        <position position="114"/>
    </location>
</feature>
<feature type="mutagenesis site" description="Impairs N-glycan recognition; when associated with Phe-462." evidence="7">
    <original>E</original>
    <variation>Q</variation>
    <location>
        <position position="456"/>
    </location>
</feature>
<feature type="mutagenesis site" description="Impairs N-glycan recognition; when associated with Gln-456." evidence="7">
    <original>Y</original>
    <variation>F</variation>
    <location>
        <position position="462"/>
    </location>
</feature>
<feature type="sequence conflict" description="In Ref. 1; BAA13906." evidence="8" ref="1">
    <original>S</original>
    <variation>A</variation>
    <location>
        <position position="112"/>
    </location>
</feature>
<feature type="sequence conflict" description="In Ref. 1; BAA13906." evidence="8" ref="1">
    <original>K</original>
    <variation>T</variation>
    <location>
        <position position="118"/>
    </location>
</feature>
<feature type="sequence conflict" description="In Ref. 1; BAA13906." evidence="8" ref="1">
    <original>L</original>
    <variation>F</variation>
    <location>
        <position position="183"/>
    </location>
</feature>
<feature type="sequence conflict" description="In Ref. 1; BAA13906." evidence="8" ref="1">
    <original>L</original>
    <variation>S</variation>
    <location>
        <position position="204"/>
    </location>
</feature>
<feature type="sequence conflict" description="In Ref. 1; BAA13906." evidence="8" ref="1">
    <original>D</original>
    <variation>N</variation>
    <location>
        <position position="475"/>
    </location>
</feature>
<feature type="sequence conflict" description="In Ref. 1; BAA13906." evidence="8" ref="1">
    <original>NEN</original>
    <variation>YED</variation>
    <location>
        <begin position="489"/>
        <end position="491"/>
    </location>
</feature>
<feature type="turn" evidence="10">
    <location>
        <begin position="381"/>
        <end position="385"/>
    </location>
</feature>
<feature type="strand" evidence="10">
    <location>
        <begin position="387"/>
        <end position="392"/>
    </location>
</feature>
<feature type="strand" evidence="10">
    <location>
        <begin position="395"/>
        <end position="400"/>
    </location>
</feature>
<feature type="strand" evidence="10">
    <location>
        <begin position="403"/>
        <end position="407"/>
    </location>
</feature>
<feature type="strand" evidence="10">
    <location>
        <begin position="410"/>
        <end position="419"/>
    </location>
</feature>
<feature type="strand" evidence="10">
    <location>
        <begin position="422"/>
        <end position="427"/>
    </location>
</feature>
<feature type="strand" evidence="9">
    <location>
        <begin position="434"/>
        <end position="436"/>
    </location>
</feature>
<feature type="strand" evidence="10">
    <location>
        <begin position="438"/>
        <end position="445"/>
    </location>
</feature>
<feature type="strand" evidence="10">
    <location>
        <begin position="450"/>
        <end position="458"/>
    </location>
</feature>
<feature type="strand" evidence="10">
    <location>
        <begin position="461"/>
        <end position="468"/>
    </location>
</feature>
<feature type="helix" evidence="10">
    <location>
        <begin position="469"/>
        <end position="471"/>
    </location>
</feature>
<accession>Q9USH8</accession>
<accession>P78894</accession>
<dbReference type="EMBL" id="D89245">
    <property type="protein sequence ID" value="BAA13906.1"/>
    <property type="status" value="ALT_INIT"/>
    <property type="molecule type" value="mRNA"/>
</dbReference>
<dbReference type="EMBL" id="CU329672">
    <property type="protein sequence ID" value="CAB58410.1"/>
    <property type="molecule type" value="Genomic_DNA"/>
</dbReference>
<dbReference type="PIR" id="T41623">
    <property type="entry name" value="T41623"/>
</dbReference>
<dbReference type="PIR" id="T43152">
    <property type="entry name" value="T43152"/>
</dbReference>
<dbReference type="PDB" id="2LVX">
    <property type="method" value="NMR"/>
    <property type="chains" value="A=380-473"/>
</dbReference>
<dbReference type="PDB" id="2N1H">
    <property type="method" value="NMR"/>
    <property type="chains" value="A=380-473"/>
</dbReference>
<dbReference type="PDB" id="4XQM">
    <property type="method" value="X-ray"/>
    <property type="resolution" value="1.62 A"/>
    <property type="chains" value="A=380-473"/>
</dbReference>
<dbReference type="PDBsum" id="2LVX"/>
<dbReference type="PDBsum" id="2N1H"/>
<dbReference type="PDBsum" id="4XQM"/>
<dbReference type="BMRB" id="Q9USH8"/>
<dbReference type="SMR" id="Q9USH8"/>
<dbReference type="BioGRID" id="275309">
    <property type="interactions" value="3"/>
</dbReference>
<dbReference type="FunCoup" id="Q9USH8">
    <property type="interactions" value="763"/>
</dbReference>
<dbReference type="STRING" id="284812.Q9USH8"/>
<dbReference type="PaxDb" id="4896-SPCC825.02.1"/>
<dbReference type="EnsemblFungi" id="SPCC825.02.1">
    <property type="protein sequence ID" value="SPCC825.02.1:pep"/>
    <property type="gene ID" value="SPCC825.02"/>
</dbReference>
<dbReference type="KEGG" id="spo:2538725"/>
<dbReference type="PomBase" id="SPCC825.02"/>
<dbReference type="VEuPathDB" id="FungiDB:SPCC825.02"/>
<dbReference type="eggNOG" id="KOG2397">
    <property type="taxonomic scope" value="Eukaryota"/>
</dbReference>
<dbReference type="HOGENOM" id="CLU_016834_2_1_1"/>
<dbReference type="InParanoid" id="Q9USH8"/>
<dbReference type="OMA" id="GICEDCC"/>
<dbReference type="PhylomeDB" id="Q9USH8"/>
<dbReference type="BRENDA" id="3.2.1.207">
    <property type="organism ID" value="5613"/>
</dbReference>
<dbReference type="EvolutionaryTrace" id="Q9USH8"/>
<dbReference type="PRO" id="PR:Q9USH8"/>
<dbReference type="Proteomes" id="UP000002485">
    <property type="component" value="Chromosome III"/>
</dbReference>
<dbReference type="GO" id="GO:0005783">
    <property type="term" value="C:endoplasmic reticulum"/>
    <property type="evidence" value="ECO:0007005"/>
    <property type="project" value="PomBase"/>
</dbReference>
<dbReference type="GO" id="GO:0005788">
    <property type="term" value="C:endoplasmic reticulum lumen"/>
    <property type="evidence" value="ECO:0000314"/>
    <property type="project" value="PomBase"/>
</dbReference>
<dbReference type="GO" id="GO:0017177">
    <property type="term" value="C:glucosidase II complex"/>
    <property type="evidence" value="ECO:0000318"/>
    <property type="project" value="GO_Central"/>
</dbReference>
<dbReference type="GO" id="GO:0005537">
    <property type="term" value="F:D-mannose binding"/>
    <property type="evidence" value="ECO:0000269"/>
    <property type="project" value="PomBase"/>
</dbReference>
<dbReference type="GO" id="GO:0030234">
    <property type="term" value="F:enzyme regulator activity"/>
    <property type="evidence" value="ECO:0000314"/>
    <property type="project" value="PomBase"/>
</dbReference>
<dbReference type="GO" id="GO:0140767">
    <property type="term" value="F:enzyme-substrate adaptor activity"/>
    <property type="evidence" value="ECO:0000269"/>
    <property type="project" value="PomBase"/>
</dbReference>
<dbReference type="GO" id="GO:2001065">
    <property type="term" value="F:mannan binding"/>
    <property type="evidence" value="ECO:0000269"/>
    <property type="project" value="PomBase"/>
</dbReference>
<dbReference type="GO" id="GO:0006491">
    <property type="term" value="P:N-glycan processing"/>
    <property type="evidence" value="ECO:0000314"/>
    <property type="project" value="PomBase"/>
</dbReference>
<dbReference type="CDD" id="cd00112">
    <property type="entry name" value="LDLa"/>
    <property type="match status" value="1"/>
</dbReference>
<dbReference type="Gene3D" id="2.70.130.10">
    <property type="entry name" value="Mannose-6-phosphate receptor binding domain"/>
    <property type="match status" value="1"/>
</dbReference>
<dbReference type="InterPro" id="IPR039794">
    <property type="entry name" value="Gtb1-like"/>
</dbReference>
<dbReference type="InterPro" id="IPR002172">
    <property type="entry name" value="LDrepeatLR_classA_rpt"/>
</dbReference>
<dbReference type="InterPro" id="IPR009011">
    <property type="entry name" value="Man6P_isomerase_rcpt-bd_dom_sf"/>
</dbReference>
<dbReference type="InterPro" id="IPR044865">
    <property type="entry name" value="MRH_dom"/>
</dbReference>
<dbReference type="InterPro" id="IPR036607">
    <property type="entry name" value="PRKCSH"/>
</dbReference>
<dbReference type="InterPro" id="IPR028146">
    <property type="entry name" value="PRKCSH_N"/>
</dbReference>
<dbReference type="PANTHER" id="PTHR12630:SF1">
    <property type="entry name" value="GLUCOSIDASE 2 SUBUNIT BETA"/>
    <property type="match status" value="1"/>
</dbReference>
<dbReference type="PANTHER" id="PTHR12630">
    <property type="entry name" value="N-LINKED OLIGOSACCHARIDE PROCESSING"/>
    <property type="match status" value="1"/>
</dbReference>
<dbReference type="Pfam" id="PF12999">
    <property type="entry name" value="PRKCSH-like"/>
    <property type="match status" value="1"/>
</dbReference>
<dbReference type="Pfam" id="PF13015">
    <property type="entry name" value="PRKCSH_1"/>
    <property type="match status" value="1"/>
</dbReference>
<dbReference type="SUPFAM" id="SSF50911">
    <property type="entry name" value="Mannose 6-phosphate receptor domain"/>
    <property type="match status" value="1"/>
</dbReference>
<dbReference type="PROSITE" id="PS51914">
    <property type="entry name" value="MRH"/>
    <property type="match status" value="1"/>
</dbReference>
<protein>
    <recommendedName>
        <fullName>Glucosidase 2 subunit beta</fullName>
    </recommendedName>
    <alternativeName>
        <fullName>Alpha-glucosidase 2 subunit beta</fullName>
    </alternativeName>
</protein>
<organism>
    <name type="scientific">Schizosaccharomyces pombe (strain 972 / ATCC 24843)</name>
    <name type="common">Fission yeast</name>
    <dbReference type="NCBI Taxonomy" id="284812"/>
    <lineage>
        <taxon>Eukaryota</taxon>
        <taxon>Fungi</taxon>
        <taxon>Dikarya</taxon>
        <taxon>Ascomycota</taxon>
        <taxon>Taphrinomycotina</taxon>
        <taxon>Schizosaccharomycetes</taxon>
        <taxon>Schizosaccharomycetales</taxon>
        <taxon>Schizosaccharomycetaceae</taxon>
        <taxon>Schizosaccharomyces</taxon>
    </lineage>
</organism>
<gene>
    <name type="primary">gtb1</name>
    <name type="synonym">gls2-beta</name>
    <name type="ORF">SPCC825.02</name>
</gene>
<proteinExistence type="evidence at protein level"/>
<reference key="1">
    <citation type="journal article" date="1997" name="DNA Res.">
        <title>Identification of open reading frames in Schizosaccharomyces pombe cDNAs.</title>
        <authorList>
            <person name="Yoshioka S."/>
            <person name="Kato K."/>
            <person name="Nakai K."/>
            <person name="Okayama H."/>
            <person name="Nojima H."/>
        </authorList>
    </citation>
    <scope>NUCLEOTIDE SEQUENCE [LARGE SCALE MRNA]</scope>
    <source>
        <strain>PR745</strain>
    </source>
</reference>
<reference key="2">
    <citation type="journal article" date="2002" name="Nature">
        <title>The genome sequence of Schizosaccharomyces pombe.</title>
        <authorList>
            <person name="Wood V."/>
            <person name="Gwilliam R."/>
            <person name="Rajandream M.A."/>
            <person name="Lyne M.H."/>
            <person name="Lyne R."/>
            <person name="Stewart A."/>
            <person name="Sgouros J.G."/>
            <person name="Peat N."/>
            <person name="Hayles J."/>
            <person name="Baker S.G."/>
            <person name="Basham D."/>
            <person name="Bowman S."/>
            <person name="Brooks K."/>
            <person name="Brown D."/>
            <person name="Brown S."/>
            <person name="Chillingworth T."/>
            <person name="Churcher C.M."/>
            <person name="Collins M."/>
            <person name="Connor R."/>
            <person name="Cronin A."/>
            <person name="Davis P."/>
            <person name="Feltwell T."/>
            <person name="Fraser A."/>
            <person name="Gentles S."/>
            <person name="Goble A."/>
            <person name="Hamlin N."/>
            <person name="Harris D.E."/>
            <person name="Hidalgo J."/>
            <person name="Hodgson G."/>
            <person name="Holroyd S."/>
            <person name="Hornsby T."/>
            <person name="Howarth S."/>
            <person name="Huckle E.J."/>
            <person name="Hunt S."/>
            <person name="Jagels K."/>
            <person name="James K.D."/>
            <person name="Jones L."/>
            <person name="Jones M."/>
            <person name="Leather S."/>
            <person name="McDonald S."/>
            <person name="McLean J."/>
            <person name="Mooney P."/>
            <person name="Moule S."/>
            <person name="Mungall K.L."/>
            <person name="Murphy L.D."/>
            <person name="Niblett D."/>
            <person name="Odell C."/>
            <person name="Oliver K."/>
            <person name="O'Neil S."/>
            <person name="Pearson D."/>
            <person name="Quail M.A."/>
            <person name="Rabbinowitsch E."/>
            <person name="Rutherford K.M."/>
            <person name="Rutter S."/>
            <person name="Saunders D."/>
            <person name="Seeger K."/>
            <person name="Sharp S."/>
            <person name="Skelton J."/>
            <person name="Simmonds M.N."/>
            <person name="Squares R."/>
            <person name="Squares S."/>
            <person name="Stevens K."/>
            <person name="Taylor K."/>
            <person name="Taylor R.G."/>
            <person name="Tivey A."/>
            <person name="Walsh S.V."/>
            <person name="Warren T."/>
            <person name="Whitehead S."/>
            <person name="Woodward J.R."/>
            <person name="Volckaert G."/>
            <person name="Aert R."/>
            <person name="Robben J."/>
            <person name="Grymonprez B."/>
            <person name="Weltjens I."/>
            <person name="Vanstreels E."/>
            <person name="Rieger M."/>
            <person name="Schaefer M."/>
            <person name="Mueller-Auer S."/>
            <person name="Gabel C."/>
            <person name="Fuchs M."/>
            <person name="Duesterhoeft A."/>
            <person name="Fritzc C."/>
            <person name="Holzer E."/>
            <person name="Moestl D."/>
            <person name="Hilbert H."/>
            <person name="Borzym K."/>
            <person name="Langer I."/>
            <person name="Beck A."/>
            <person name="Lehrach H."/>
            <person name="Reinhardt R."/>
            <person name="Pohl T.M."/>
            <person name="Eger P."/>
            <person name="Zimmermann W."/>
            <person name="Wedler H."/>
            <person name="Wambutt R."/>
            <person name="Purnelle B."/>
            <person name="Goffeau A."/>
            <person name="Cadieu E."/>
            <person name="Dreano S."/>
            <person name="Gloux S."/>
            <person name="Lelaure V."/>
            <person name="Mottier S."/>
            <person name="Galibert F."/>
            <person name="Aves S.J."/>
            <person name="Xiang Z."/>
            <person name="Hunt C."/>
            <person name="Moore K."/>
            <person name="Hurst S.M."/>
            <person name="Lucas M."/>
            <person name="Rochet M."/>
            <person name="Gaillardin C."/>
            <person name="Tallada V.A."/>
            <person name="Garzon A."/>
            <person name="Thode G."/>
            <person name="Daga R.R."/>
            <person name="Cruzado L."/>
            <person name="Jimenez J."/>
            <person name="Sanchez M."/>
            <person name="del Rey F."/>
            <person name="Benito J."/>
            <person name="Dominguez A."/>
            <person name="Revuelta J.L."/>
            <person name="Moreno S."/>
            <person name="Armstrong J."/>
            <person name="Forsburg S.L."/>
            <person name="Cerutti L."/>
            <person name="Lowe T."/>
            <person name="McCombie W.R."/>
            <person name="Paulsen I."/>
            <person name="Potashkin J."/>
            <person name="Shpakovski G.V."/>
            <person name="Ussery D."/>
            <person name="Barrell B.G."/>
            <person name="Nurse P."/>
        </authorList>
    </citation>
    <scope>NUCLEOTIDE SEQUENCE [LARGE SCALE GENOMIC DNA]</scope>
    <source>
        <strain>972 / ATCC 24843</strain>
    </source>
</reference>
<reference key="3">
    <citation type="journal article" date="1999" name="J. Biol. Chem.">
        <title>Genetic evidence for the heterodimeric structure of glucosidase II. The effect of disrupting the subunit-encoding genes on glycoprotein folding.</title>
        <authorList>
            <person name="D'Alessio C."/>
            <person name="Fernandez F."/>
            <person name="Trombetta E.S."/>
            <person name="Parodi A.J."/>
        </authorList>
    </citation>
    <scope>FUNCTION</scope>
    <scope>CATALYTIC ACTIVITY</scope>
</reference>
<reference key="4">
    <citation type="journal article" date="2006" name="Nat. Biotechnol.">
        <title>ORFeome cloning and global analysis of protein localization in the fission yeast Schizosaccharomyces pombe.</title>
        <authorList>
            <person name="Matsuyama A."/>
            <person name="Arai R."/>
            <person name="Yashiroda Y."/>
            <person name="Shirai A."/>
            <person name="Kamata A."/>
            <person name="Sekido S."/>
            <person name="Kobayashi Y."/>
            <person name="Hashimoto A."/>
            <person name="Hamamoto M."/>
            <person name="Hiraoka Y."/>
            <person name="Horinouchi S."/>
            <person name="Yoshida M."/>
        </authorList>
    </citation>
    <scope>SUBCELLULAR LOCATION [LARGE SCALE ANALYSIS]</scope>
</reference>
<reference key="5">
    <citation type="journal article" date="2009" name="Mol. Biol. Cell">
        <title>Glucosidase II beta subunit modulates N-glycan trimming in fission yeasts and mammals.</title>
        <authorList>
            <person name="Stigliano I.D."/>
            <person name="Caramelo J.J."/>
            <person name="Labriola C.A."/>
            <person name="Parodi A.J."/>
            <person name="D'Alessio C."/>
        </authorList>
    </citation>
    <scope>FUNCTION</scope>
    <scope>CATALYTIC ACTIVITY</scope>
</reference>
<reference key="6">
    <citation type="journal article" date="2011" name="Mol. Biol. Cell">
        <title>Glucosidase II and N-glycan mannose content regulate the half-lives of monoglucosylated species in vivo.</title>
        <authorList>
            <person name="Stigliano I.D."/>
            <person name="Alculumbre S.G."/>
            <person name="Labriola C.A."/>
            <person name="Parodi A.J."/>
            <person name="D'Alessio C."/>
        </authorList>
    </citation>
    <scope>FUNCTION</scope>
    <scope>DOMAIN</scope>
    <scope>INTERACTION WITH GLS2</scope>
    <scope>MUTAGENESIS OF GLU-73; GLU-114; GLU-456 AND TYR-462</scope>
</reference>
<name>GLU2B_SCHPO</name>
<keyword id="KW-0002">3D-structure</keyword>
<keyword id="KW-0175">Coiled coil</keyword>
<keyword id="KW-1015">Disulfide bond</keyword>
<keyword id="KW-0256">Endoplasmic reticulum</keyword>
<keyword id="KW-1185">Reference proteome</keyword>
<keyword id="KW-0732">Signal</keyword>
<comment type="function">
    <text evidence="4 6 7">Subunit of glucosidase 2, which cleaves sequentially the 2 innermost alpha-1,3-linked glucose residues from the Glc(2)Man(9)GlcNAc(2) oligosaccharide precursor of immature glycoproteins in the endoplasmic reticulum (ER). Specifically required for the cleavage of the final glucose. The subunit beta retains the catalytic subunit alpha in the ER.</text>
</comment>
<comment type="subunit">
    <text>Heterodimer of a catalytic subunit alpha (gls2) and a subunit beta (gtb1).</text>
</comment>
<comment type="subcellular location">
    <subcellularLocation>
        <location evidence="5">Endoplasmic reticulum</location>
    </subcellularLocation>
</comment>
<comment type="domain">
    <text evidence="7">The N-terminal conserved region (G2B region) is required for the interaction with gls2 and its translocation to the endoplasmic reticulum, whereas the C-terminal conserved region (MRH region) is involved in the recognition of N-glycans bearing from 5 to 9 mannose units.</text>
</comment>
<comment type="sequence caution" evidence="8">
    <conflict type="erroneous initiation">
        <sequence resource="EMBL-CDS" id="BAA13906"/>
    </conflict>
    <text>Truncated N-terminus.</text>
</comment>
<evidence type="ECO:0000250" key="1"/>
<evidence type="ECO:0000255" key="2"/>
<evidence type="ECO:0000255" key="3">
    <source>
        <dbReference type="PROSITE-ProRule" id="PRU01262"/>
    </source>
</evidence>
<evidence type="ECO:0000269" key="4">
    <source>
    </source>
</evidence>
<evidence type="ECO:0000269" key="5">
    <source>
    </source>
</evidence>
<evidence type="ECO:0000269" key="6">
    <source>
    </source>
</evidence>
<evidence type="ECO:0000269" key="7">
    <source>
    </source>
</evidence>
<evidence type="ECO:0000305" key="8"/>
<evidence type="ECO:0007829" key="9">
    <source>
        <dbReference type="PDB" id="2LVX"/>
    </source>
</evidence>
<evidence type="ECO:0007829" key="10">
    <source>
        <dbReference type="PDB" id="4XQM"/>
    </source>
</evidence>